<protein>
    <recommendedName>
        <fullName evidence="4">Transmembrane protein 120A-A</fullName>
    </recommendedName>
    <alternativeName>
        <fullName evidence="1">Ion channel TACAN</fullName>
    </alternativeName>
</protein>
<sequence length="341" mass="40684">MLFNPTGLTECLQEWEDLEKDYQQIQDTHRHYKHKLEEVSKLQESCSSSIARQRKKLKDLSESLEECKGAVNPEDVNKIDDIQESIKERPNVFFEMEAFLPKKNGLYLSLVLGNVNVTLLNKQSKFAYKDEYEKFKLYLTVLLLFFSFTCRFLVSYRVVDALFNFLLVWYYCTLTIRESILINNGSKIKGWWVFQHYVSTFLSGVMLTWPDGELYQMFRNQFLSYSMYINFVQFFQYYYQSGCLYRLRALGERHNMDLTVEGFQSWMWRGLTFLLPFLFLGHFFQLYNGITLFQMTQLPEWKEWQVLMCGSTFLVLFMGNFFTTLGVVYHKYMDQDKAKGL</sequence>
<gene>
    <name type="primary">tmem120aa</name>
    <name evidence="3" type="ORF">zgc:162139</name>
</gene>
<feature type="chain" id="PRO_0000309527" description="Transmembrane protein 120A-A">
    <location>
        <begin position="1"/>
        <end position="341"/>
    </location>
</feature>
<feature type="topological domain" description="Cytoplasmic" evidence="4">
    <location>
        <begin position="1"/>
        <end position="131"/>
    </location>
</feature>
<feature type="transmembrane region" description="Helical; Name=1" evidence="2">
    <location>
        <begin position="132"/>
        <end position="151"/>
    </location>
</feature>
<feature type="topological domain" description="Extracellular" evidence="4">
    <location>
        <begin position="152"/>
        <end position="157"/>
    </location>
</feature>
<feature type="transmembrane region" description="Helical; Name=2" evidence="2">
    <location>
        <begin position="158"/>
        <end position="176"/>
    </location>
</feature>
<feature type="topological domain" description="Cytoplasmic" evidence="4">
    <location>
        <begin position="177"/>
        <end position="189"/>
    </location>
</feature>
<feature type="transmembrane region" description="Helical; Name=3" evidence="2">
    <location>
        <begin position="190"/>
        <end position="208"/>
    </location>
</feature>
<feature type="topological domain" description="Extracellular" evidence="4">
    <location>
        <begin position="209"/>
        <end position="217"/>
    </location>
</feature>
<feature type="transmembrane region" description="Helical; Name=4" evidence="2">
    <location>
        <begin position="218"/>
        <end position="239"/>
    </location>
</feature>
<feature type="topological domain" description="Cytoplasmic" evidence="4">
    <location>
        <begin position="240"/>
        <end position="269"/>
    </location>
</feature>
<feature type="transmembrane region" description="Helical; Name=5" evidence="2">
    <location>
        <begin position="270"/>
        <end position="293"/>
    </location>
</feature>
<feature type="topological domain" description="Extracellular" evidence="4">
    <location>
        <begin position="294"/>
        <end position="303"/>
    </location>
</feature>
<feature type="transmembrane region" description="Helical; Name=6" evidence="2">
    <location>
        <begin position="304"/>
        <end position="329"/>
    </location>
</feature>
<feature type="topological domain" description="Cytoplasmic" evidence="4">
    <location>
        <begin position="330"/>
        <end position="341"/>
    </location>
</feature>
<feature type="binding site" evidence="2">
    <location>
        <position position="129"/>
    </location>
    <ligand>
        <name>CoA</name>
        <dbReference type="ChEBI" id="CHEBI:57287"/>
    </ligand>
</feature>
<feature type="binding site" evidence="2">
    <location>
        <position position="186"/>
    </location>
    <ligand>
        <name>CoA</name>
        <dbReference type="ChEBI" id="CHEBI:57287"/>
    </ligand>
</feature>
<feature type="binding site" evidence="2">
    <location>
        <position position="187"/>
    </location>
    <ligand>
        <name>CoA</name>
        <dbReference type="ChEBI" id="CHEBI:57287"/>
    </ligand>
</feature>
<feature type="binding site" evidence="2">
    <location>
        <position position="236"/>
    </location>
    <ligand>
        <name>CoA</name>
        <dbReference type="ChEBI" id="CHEBI:57287"/>
    </ligand>
</feature>
<feature type="binding site" evidence="2">
    <location>
        <position position="239"/>
    </location>
    <ligand>
        <name>CoA</name>
        <dbReference type="ChEBI" id="CHEBI:57287"/>
    </ligand>
</feature>
<feature type="binding site" evidence="2">
    <location>
        <position position="240"/>
    </location>
    <ligand>
        <name>CoA</name>
        <dbReference type="ChEBI" id="CHEBI:57287"/>
    </ligand>
</feature>
<feature type="binding site" evidence="1">
    <location>
        <position position="282"/>
    </location>
    <ligand>
        <name>CoA</name>
        <dbReference type="ChEBI" id="CHEBI:57287"/>
    </ligand>
</feature>
<feature type="binding site" evidence="2">
    <location>
        <position position="331"/>
    </location>
    <ligand>
        <name>CoA</name>
        <dbReference type="ChEBI" id="CHEBI:57287"/>
    </ligand>
</feature>
<comment type="function">
    <text evidence="2">Multifunctional protein involved in mechanosensation, and plays an essential role in lipid metabolism (By similarity). May function as a potential ion channel involved in sensing mechanical stimuli. TMEM120A is structurally similar to a lipid-modifying enzyme, ELOVL7, and contains a bound coenzyme A molecule, which suggests it might function as an enzyme in lipid metabolism (By similarity).</text>
</comment>
<comment type="subunit">
    <text evidence="2">Homodimer.</text>
</comment>
<comment type="subcellular location">
    <subcellularLocation>
        <location evidence="2">Cell membrane</location>
        <topology evidence="2">Multi-pass membrane protein</topology>
    </subcellularLocation>
    <subcellularLocation>
        <location evidence="1">Nucleus inner membrane</location>
        <topology evidence="2">Multi-pass membrane protein</topology>
    </subcellularLocation>
    <subcellularLocation>
        <location evidence="2">Endoplasmic reticulum</location>
    </subcellularLocation>
</comment>
<comment type="domain">
    <text evidence="2">The transmembrane domain (TMD) has structural homology to the very long chain fatty acid elongase 7, ELOVL7, despite low sequence homology between them.</text>
</comment>
<comment type="similarity">
    <text evidence="4">Belongs to the TMEM120 family.</text>
</comment>
<comment type="caution">
    <text evidence="1 2 4">Whether TMEM120S functions as a mechanosensitive ion channel is controversial (By similarity). Its structural homology to ELOVL7, leads to suggest than TMEM120A may function as an enzyme involved in fatty acid metabolism, although its enzymatic activity and its potential substrates remain unknown (By similarity). Whether TMEM120A is an enzyme rather than an ion channel is still under debate.</text>
</comment>
<keyword id="KW-1003">Cell membrane</keyword>
<keyword id="KW-0256">Endoplasmic reticulum</keyword>
<keyword id="KW-0472">Membrane</keyword>
<keyword id="KW-0539">Nucleus</keyword>
<keyword id="KW-1185">Reference proteome</keyword>
<keyword id="KW-0812">Transmembrane</keyword>
<keyword id="KW-1133">Transmembrane helix</keyword>
<accession>A3KNK1</accession>
<name>TACAN_DANRE</name>
<proteinExistence type="evidence at transcript level"/>
<organism>
    <name type="scientific">Danio rerio</name>
    <name type="common">Zebrafish</name>
    <name type="synonym">Brachydanio rerio</name>
    <dbReference type="NCBI Taxonomy" id="7955"/>
    <lineage>
        <taxon>Eukaryota</taxon>
        <taxon>Metazoa</taxon>
        <taxon>Chordata</taxon>
        <taxon>Craniata</taxon>
        <taxon>Vertebrata</taxon>
        <taxon>Euteleostomi</taxon>
        <taxon>Actinopterygii</taxon>
        <taxon>Neopterygii</taxon>
        <taxon>Teleostei</taxon>
        <taxon>Ostariophysi</taxon>
        <taxon>Cypriniformes</taxon>
        <taxon>Danionidae</taxon>
        <taxon>Danioninae</taxon>
        <taxon>Danio</taxon>
    </lineage>
</organism>
<evidence type="ECO:0000250" key="1">
    <source>
        <dbReference type="UniProtKB" id="Q8C1E7"/>
    </source>
</evidence>
<evidence type="ECO:0000250" key="2">
    <source>
        <dbReference type="UniProtKB" id="Q9BXJ8"/>
    </source>
</evidence>
<evidence type="ECO:0000303" key="3">
    <source ref="1"/>
</evidence>
<evidence type="ECO:0000305" key="4"/>
<reference key="1">
    <citation type="submission" date="2007-03" db="EMBL/GenBank/DDBJ databases">
        <authorList>
            <consortium name="NIH - Zebrafish Gene Collection (ZGC) project"/>
        </authorList>
    </citation>
    <scope>NUCLEOTIDE SEQUENCE [LARGE SCALE MRNA]</scope>
</reference>
<dbReference type="EMBL" id="BC133884">
    <property type="protein sequence ID" value="AAI33885.1"/>
    <property type="molecule type" value="mRNA"/>
</dbReference>
<dbReference type="RefSeq" id="NP_001076452.1">
    <property type="nucleotide sequence ID" value="NM_001082983.1"/>
</dbReference>
<dbReference type="SMR" id="A3KNK1"/>
<dbReference type="FunCoup" id="A3KNK1">
    <property type="interactions" value="851"/>
</dbReference>
<dbReference type="STRING" id="7955.ENSDARP00000048830"/>
<dbReference type="PaxDb" id="7955-ENSDARP00000048830"/>
<dbReference type="Ensembl" id="ENSDART00000048831">
    <property type="protein sequence ID" value="ENSDARP00000048830"/>
    <property type="gene ID" value="ENSDARG00000030914"/>
</dbReference>
<dbReference type="GeneID" id="100005623"/>
<dbReference type="KEGG" id="dre:100005623"/>
<dbReference type="AGR" id="ZFIN:ZDB-GENE-070424-21"/>
<dbReference type="CTD" id="100005623"/>
<dbReference type="ZFIN" id="ZDB-GENE-070424-21">
    <property type="gene designation" value="tmem120aa"/>
</dbReference>
<dbReference type="eggNOG" id="KOG4758">
    <property type="taxonomic scope" value="Eukaryota"/>
</dbReference>
<dbReference type="HOGENOM" id="CLU_048749_1_1_1"/>
<dbReference type="InParanoid" id="A3KNK1"/>
<dbReference type="OMA" id="DRYRYKQ"/>
<dbReference type="OrthoDB" id="2015098at2759"/>
<dbReference type="PhylomeDB" id="A3KNK1"/>
<dbReference type="TreeFam" id="TF313552"/>
<dbReference type="PRO" id="PR:A3KNK1"/>
<dbReference type="Proteomes" id="UP000000437">
    <property type="component" value="Chromosome 10"/>
</dbReference>
<dbReference type="Bgee" id="ENSDARG00000030914">
    <property type="expression patterns" value="Expressed in testis and 21 other cell types or tissues"/>
</dbReference>
<dbReference type="GO" id="GO:0005783">
    <property type="term" value="C:endoplasmic reticulum"/>
    <property type="evidence" value="ECO:0007669"/>
    <property type="project" value="UniProtKB-SubCell"/>
</dbReference>
<dbReference type="GO" id="GO:0016020">
    <property type="term" value="C:membrane"/>
    <property type="evidence" value="ECO:0000318"/>
    <property type="project" value="GO_Central"/>
</dbReference>
<dbReference type="GO" id="GO:0005637">
    <property type="term" value="C:nuclear inner membrane"/>
    <property type="evidence" value="ECO:0007669"/>
    <property type="project" value="UniProtKB-SubCell"/>
</dbReference>
<dbReference type="GO" id="GO:0005886">
    <property type="term" value="C:plasma membrane"/>
    <property type="evidence" value="ECO:0000250"/>
    <property type="project" value="UniProtKB"/>
</dbReference>
<dbReference type="GO" id="GO:0120225">
    <property type="term" value="F:coenzyme A binding"/>
    <property type="evidence" value="ECO:0000250"/>
    <property type="project" value="UniProtKB"/>
</dbReference>
<dbReference type="GO" id="GO:0005216">
    <property type="term" value="F:monoatomic ion channel activity"/>
    <property type="evidence" value="ECO:0000250"/>
    <property type="project" value="UniProtKB"/>
</dbReference>
<dbReference type="GO" id="GO:0050966">
    <property type="term" value="P:detection of mechanical stimulus involved in sensory perception of pain"/>
    <property type="evidence" value="ECO:0000250"/>
    <property type="project" value="UniProtKB"/>
</dbReference>
<dbReference type="GO" id="GO:0045444">
    <property type="term" value="P:fat cell differentiation"/>
    <property type="evidence" value="ECO:0000318"/>
    <property type="project" value="GO_Central"/>
</dbReference>
<dbReference type="GO" id="GO:0034220">
    <property type="term" value="P:monoatomic ion transmembrane transport"/>
    <property type="evidence" value="ECO:0000250"/>
    <property type="project" value="UniProtKB"/>
</dbReference>
<dbReference type="InterPro" id="IPR012926">
    <property type="entry name" value="TMEM120A/B"/>
</dbReference>
<dbReference type="PANTHER" id="PTHR21433:SF1">
    <property type="entry name" value="ION CHANNEL TACAN"/>
    <property type="match status" value="1"/>
</dbReference>
<dbReference type="PANTHER" id="PTHR21433">
    <property type="entry name" value="TRANSMEMBRANE PROTEIN INDUCED BY TUMOR NECROSIS FACTOR ALPHA"/>
    <property type="match status" value="1"/>
</dbReference>
<dbReference type="Pfam" id="PF07851">
    <property type="entry name" value="TMEM120A-B"/>
    <property type="match status" value="1"/>
</dbReference>